<reference key="1">
    <citation type="journal article" date="2008" name="DNA Res.">
        <title>Complete genome sequence and comparative analysis of the wild-type commensal Escherichia coli strain SE11 isolated from a healthy adult.</title>
        <authorList>
            <person name="Oshima K."/>
            <person name="Toh H."/>
            <person name="Ogura Y."/>
            <person name="Sasamoto H."/>
            <person name="Morita H."/>
            <person name="Park S.-H."/>
            <person name="Ooka T."/>
            <person name="Iyoda S."/>
            <person name="Taylor T.D."/>
            <person name="Hayashi T."/>
            <person name="Itoh K."/>
            <person name="Hattori M."/>
        </authorList>
    </citation>
    <scope>NUCLEOTIDE SEQUENCE [LARGE SCALE GENOMIC DNA]</scope>
    <source>
        <strain>SE11</strain>
    </source>
</reference>
<protein>
    <recommendedName>
        <fullName evidence="1">D-serine dehydratase</fullName>
        <ecNumber evidence="1">4.3.1.18</ecNumber>
    </recommendedName>
    <alternativeName>
        <fullName evidence="1">D-serine deaminase</fullName>
        <shortName evidence="1">DSD</shortName>
    </alternativeName>
</protein>
<proteinExistence type="inferred from homology"/>
<accession>B6I6R7</accession>
<dbReference type="EC" id="4.3.1.18" evidence="1"/>
<dbReference type="EMBL" id="AP009240">
    <property type="protein sequence ID" value="BAG78187.1"/>
    <property type="molecule type" value="Genomic_DNA"/>
</dbReference>
<dbReference type="RefSeq" id="WP_000426427.1">
    <property type="nucleotide sequence ID" value="NC_011415.1"/>
</dbReference>
<dbReference type="SMR" id="B6I6R7"/>
<dbReference type="KEGG" id="ecy:ECSE_2663"/>
<dbReference type="HOGENOM" id="CLU_035707_0_0_6"/>
<dbReference type="Proteomes" id="UP000008199">
    <property type="component" value="Chromosome"/>
</dbReference>
<dbReference type="GO" id="GO:0008721">
    <property type="term" value="F:D-serine ammonia-lyase activity"/>
    <property type="evidence" value="ECO:0007669"/>
    <property type="project" value="UniProtKB-EC"/>
</dbReference>
<dbReference type="GO" id="GO:0016836">
    <property type="term" value="F:hydro-lyase activity"/>
    <property type="evidence" value="ECO:0007669"/>
    <property type="project" value="UniProtKB-UniRule"/>
</dbReference>
<dbReference type="GO" id="GO:0030170">
    <property type="term" value="F:pyridoxal phosphate binding"/>
    <property type="evidence" value="ECO:0007669"/>
    <property type="project" value="InterPro"/>
</dbReference>
<dbReference type="GO" id="GO:0036088">
    <property type="term" value="P:D-serine catabolic process"/>
    <property type="evidence" value="ECO:0007669"/>
    <property type="project" value="TreeGrafter"/>
</dbReference>
<dbReference type="GO" id="GO:0009097">
    <property type="term" value="P:isoleucine biosynthetic process"/>
    <property type="evidence" value="ECO:0007669"/>
    <property type="project" value="TreeGrafter"/>
</dbReference>
<dbReference type="CDD" id="cd06447">
    <property type="entry name" value="D-Ser-dehyd"/>
    <property type="match status" value="1"/>
</dbReference>
<dbReference type="FunFam" id="3.40.50.1100:FF:000018">
    <property type="entry name" value="D-serine dehydratase"/>
    <property type="match status" value="1"/>
</dbReference>
<dbReference type="Gene3D" id="3.40.50.1100">
    <property type="match status" value="2"/>
</dbReference>
<dbReference type="HAMAP" id="MF_01030">
    <property type="entry name" value="D_Ser_dehydrat"/>
    <property type="match status" value="1"/>
</dbReference>
<dbReference type="InterPro" id="IPR011780">
    <property type="entry name" value="D_Ser_am_lyase"/>
</dbReference>
<dbReference type="InterPro" id="IPR050147">
    <property type="entry name" value="Ser/Thr_Dehydratase"/>
</dbReference>
<dbReference type="InterPro" id="IPR000634">
    <property type="entry name" value="Ser/Thr_deHydtase_PyrdxlP-BS"/>
</dbReference>
<dbReference type="InterPro" id="IPR001926">
    <property type="entry name" value="TrpB-like_PALP"/>
</dbReference>
<dbReference type="InterPro" id="IPR036052">
    <property type="entry name" value="TrpB-like_PALP_sf"/>
</dbReference>
<dbReference type="NCBIfam" id="TIGR02035">
    <property type="entry name" value="D_Ser_am_lyase"/>
    <property type="match status" value="1"/>
</dbReference>
<dbReference type="NCBIfam" id="NF002823">
    <property type="entry name" value="PRK02991.1"/>
    <property type="match status" value="1"/>
</dbReference>
<dbReference type="PANTHER" id="PTHR48078:SF9">
    <property type="entry name" value="D-SERINE DEHYDRATASE"/>
    <property type="match status" value="1"/>
</dbReference>
<dbReference type="PANTHER" id="PTHR48078">
    <property type="entry name" value="THREONINE DEHYDRATASE, MITOCHONDRIAL-RELATED"/>
    <property type="match status" value="1"/>
</dbReference>
<dbReference type="Pfam" id="PF00291">
    <property type="entry name" value="PALP"/>
    <property type="match status" value="1"/>
</dbReference>
<dbReference type="SUPFAM" id="SSF53686">
    <property type="entry name" value="Tryptophan synthase beta subunit-like PLP-dependent enzymes"/>
    <property type="match status" value="1"/>
</dbReference>
<dbReference type="PROSITE" id="PS00165">
    <property type="entry name" value="DEHYDRATASE_SER_THR"/>
    <property type="match status" value="1"/>
</dbReference>
<organism>
    <name type="scientific">Escherichia coli (strain SE11)</name>
    <dbReference type="NCBI Taxonomy" id="409438"/>
    <lineage>
        <taxon>Bacteria</taxon>
        <taxon>Pseudomonadati</taxon>
        <taxon>Pseudomonadota</taxon>
        <taxon>Gammaproteobacteria</taxon>
        <taxon>Enterobacterales</taxon>
        <taxon>Enterobacteriaceae</taxon>
        <taxon>Escherichia</taxon>
    </lineage>
</organism>
<sequence>MENAKMNSLIAQYPLVKDLVALKETTWFNPGTTSLAEGLPYVGLTEQDVQDAHARLSRFAPYLAKAFPETAATGGIIESELVAIPAMQKRLEKEYQQPISGQLLLKKDSHLPISGSIKARGGIYEVLAHAEKLALEAGLLTLDDDYSKLLSPEFKQFFSQYSIAVGSTGNLGLSIGIMSARIGFKVTVHMSADARAWKKAKLRSHGVTVVEYEQDYGVAVEEGRKAAQSDPNCFFIDDENSRTLFLGYSVAGQRLKAQFAQQGRIVDADNPLFVYLPCGVGGGPGGVAFGLKLAFGDHVHCFFAEPTHSPCMLLGVHTGLHDQISVQDIGIDNLTAADGLAVGRASGFVGRAMERLLDGFYTLSDQTMYDMLGWLAQEEGIRLEPSALAGMAGPQRVCASVSYQQMHGFSAEQLRNTTHLVWATGGGMVPEEEMNQYLAKGR</sequence>
<comment type="catalytic activity">
    <reaction evidence="1">
        <text>D-serine = pyruvate + NH4(+)</text>
        <dbReference type="Rhea" id="RHEA:13977"/>
        <dbReference type="ChEBI" id="CHEBI:15361"/>
        <dbReference type="ChEBI" id="CHEBI:28938"/>
        <dbReference type="ChEBI" id="CHEBI:35247"/>
        <dbReference type="EC" id="4.3.1.18"/>
    </reaction>
</comment>
<comment type="cofactor">
    <cofactor evidence="1">
        <name>pyridoxal 5'-phosphate</name>
        <dbReference type="ChEBI" id="CHEBI:597326"/>
    </cofactor>
</comment>
<comment type="subunit">
    <text evidence="1">Monomer.</text>
</comment>
<comment type="similarity">
    <text evidence="1">Belongs to the serine/threonine dehydratase family. DsdA subfamily.</text>
</comment>
<gene>
    <name evidence="1" type="primary">dsdA</name>
    <name type="ordered locus">ECSE_2663</name>
</gene>
<feature type="chain" id="PRO_1000197938" description="D-serine dehydratase">
    <location>
        <begin position="1"/>
        <end position="442"/>
    </location>
</feature>
<feature type="modified residue" description="N6-(pyridoxal phosphate)lysine" evidence="1">
    <location>
        <position position="118"/>
    </location>
</feature>
<evidence type="ECO:0000255" key="1">
    <source>
        <dbReference type="HAMAP-Rule" id="MF_01030"/>
    </source>
</evidence>
<keyword id="KW-0456">Lyase</keyword>
<keyword id="KW-0663">Pyridoxal phosphate</keyword>
<name>SDHD_ECOSE</name>